<accession>Q88Q89</accession>
<dbReference type="EC" id="1.17.7.4" evidence="1"/>
<dbReference type="EMBL" id="AE015451">
    <property type="protein sequence ID" value="AAN66232.1"/>
    <property type="molecule type" value="Genomic_DNA"/>
</dbReference>
<dbReference type="RefSeq" id="NP_742768.1">
    <property type="nucleotide sequence ID" value="NC_002947.4"/>
</dbReference>
<dbReference type="RefSeq" id="WP_010951872.1">
    <property type="nucleotide sequence ID" value="NZ_CP169744.1"/>
</dbReference>
<dbReference type="SMR" id="Q88Q89"/>
<dbReference type="STRING" id="160488.PP_0606"/>
<dbReference type="PaxDb" id="160488-PP_0606"/>
<dbReference type="DNASU" id="1044422"/>
<dbReference type="GeneID" id="83677937"/>
<dbReference type="KEGG" id="ppu:PP_0606"/>
<dbReference type="PATRIC" id="fig|160488.4.peg.646"/>
<dbReference type="eggNOG" id="COG0761">
    <property type="taxonomic scope" value="Bacteria"/>
</dbReference>
<dbReference type="HOGENOM" id="CLU_027486_1_1_6"/>
<dbReference type="OrthoDB" id="9804068at2"/>
<dbReference type="PhylomeDB" id="Q88Q89"/>
<dbReference type="BioCyc" id="PPUT160488:G1G01-663-MONOMER"/>
<dbReference type="UniPathway" id="UPA00056">
    <property type="reaction ID" value="UER00097"/>
</dbReference>
<dbReference type="UniPathway" id="UPA00059">
    <property type="reaction ID" value="UER00105"/>
</dbReference>
<dbReference type="Proteomes" id="UP000000556">
    <property type="component" value="Chromosome"/>
</dbReference>
<dbReference type="GO" id="GO:0051539">
    <property type="term" value="F:4 iron, 4 sulfur cluster binding"/>
    <property type="evidence" value="ECO:0007669"/>
    <property type="project" value="UniProtKB-UniRule"/>
</dbReference>
<dbReference type="GO" id="GO:0051745">
    <property type="term" value="F:4-hydroxy-3-methylbut-2-enyl diphosphate reductase activity"/>
    <property type="evidence" value="ECO:0007669"/>
    <property type="project" value="UniProtKB-UniRule"/>
</dbReference>
<dbReference type="GO" id="GO:0046872">
    <property type="term" value="F:metal ion binding"/>
    <property type="evidence" value="ECO:0007669"/>
    <property type="project" value="UniProtKB-KW"/>
</dbReference>
<dbReference type="GO" id="GO:0050992">
    <property type="term" value="P:dimethylallyl diphosphate biosynthetic process"/>
    <property type="evidence" value="ECO:0007669"/>
    <property type="project" value="UniProtKB-UniRule"/>
</dbReference>
<dbReference type="GO" id="GO:0019288">
    <property type="term" value="P:isopentenyl diphosphate biosynthetic process, methylerythritol 4-phosphate pathway"/>
    <property type="evidence" value="ECO:0007669"/>
    <property type="project" value="UniProtKB-UniRule"/>
</dbReference>
<dbReference type="GO" id="GO:0016114">
    <property type="term" value="P:terpenoid biosynthetic process"/>
    <property type="evidence" value="ECO:0007669"/>
    <property type="project" value="UniProtKB-UniRule"/>
</dbReference>
<dbReference type="CDD" id="cd13944">
    <property type="entry name" value="lytB_ispH"/>
    <property type="match status" value="1"/>
</dbReference>
<dbReference type="Gene3D" id="3.40.50.11270">
    <property type="match status" value="1"/>
</dbReference>
<dbReference type="Gene3D" id="3.40.1010.20">
    <property type="entry name" value="4-hydroxy-3-methylbut-2-enyl diphosphate reductase, catalytic domain"/>
    <property type="match status" value="2"/>
</dbReference>
<dbReference type="HAMAP" id="MF_00191">
    <property type="entry name" value="IspH"/>
    <property type="match status" value="1"/>
</dbReference>
<dbReference type="InterPro" id="IPR003451">
    <property type="entry name" value="LytB/IspH"/>
</dbReference>
<dbReference type="NCBIfam" id="TIGR00216">
    <property type="entry name" value="ispH_lytB"/>
    <property type="match status" value="1"/>
</dbReference>
<dbReference type="NCBIfam" id="NF002188">
    <property type="entry name" value="PRK01045.1-2"/>
    <property type="match status" value="1"/>
</dbReference>
<dbReference type="NCBIfam" id="NF002190">
    <property type="entry name" value="PRK01045.1-4"/>
    <property type="match status" value="1"/>
</dbReference>
<dbReference type="PANTHER" id="PTHR30426">
    <property type="entry name" value="4-HYDROXY-3-METHYLBUT-2-ENYL DIPHOSPHATE REDUCTASE"/>
    <property type="match status" value="1"/>
</dbReference>
<dbReference type="PANTHER" id="PTHR30426:SF0">
    <property type="entry name" value="4-HYDROXY-3-METHYLBUT-2-ENYL DIPHOSPHATE REDUCTASE"/>
    <property type="match status" value="1"/>
</dbReference>
<dbReference type="Pfam" id="PF02401">
    <property type="entry name" value="LYTB"/>
    <property type="match status" value="1"/>
</dbReference>
<feature type="chain" id="PRO_0000128858" description="4-hydroxy-3-methylbut-2-enyl diphosphate reductase">
    <location>
        <begin position="1"/>
        <end position="315"/>
    </location>
</feature>
<feature type="active site" description="Proton donor" evidence="1">
    <location>
        <position position="126"/>
    </location>
</feature>
<feature type="binding site" evidence="1">
    <location>
        <position position="12"/>
    </location>
    <ligand>
        <name>[4Fe-4S] cluster</name>
        <dbReference type="ChEBI" id="CHEBI:49883"/>
    </ligand>
</feature>
<feature type="binding site" evidence="1">
    <location>
        <position position="41"/>
    </location>
    <ligand>
        <name>(2E)-4-hydroxy-3-methylbut-2-enyl diphosphate</name>
        <dbReference type="ChEBI" id="CHEBI:128753"/>
    </ligand>
</feature>
<feature type="binding site" evidence="1">
    <location>
        <position position="41"/>
    </location>
    <ligand>
        <name>dimethylallyl diphosphate</name>
        <dbReference type="ChEBI" id="CHEBI:57623"/>
    </ligand>
</feature>
<feature type="binding site" evidence="1">
    <location>
        <position position="41"/>
    </location>
    <ligand>
        <name>isopentenyl diphosphate</name>
        <dbReference type="ChEBI" id="CHEBI:128769"/>
    </ligand>
</feature>
<feature type="binding site" evidence="1">
    <location>
        <position position="74"/>
    </location>
    <ligand>
        <name>(2E)-4-hydroxy-3-methylbut-2-enyl diphosphate</name>
        <dbReference type="ChEBI" id="CHEBI:128753"/>
    </ligand>
</feature>
<feature type="binding site" evidence="1">
    <location>
        <position position="74"/>
    </location>
    <ligand>
        <name>dimethylallyl diphosphate</name>
        <dbReference type="ChEBI" id="CHEBI:57623"/>
    </ligand>
</feature>
<feature type="binding site" evidence="1">
    <location>
        <position position="74"/>
    </location>
    <ligand>
        <name>isopentenyl diphosphate</name>
        <dbReference type="ChEBI" id="CHEBI:128769"/>
    </ligand>
</feature>
<feature type="binding site" evidence="1">
    <location>
        <position position="96"/>
    </location>
    <ligand>
        <name>[4Fe-4S] cluster</name>
        <dbReference type="ChEBI" id="CHEBI:49883"/>
    </ligand>
</feature>
<feature type="binding site" evidence="1">
    <location>
        <position position="124"/>
    </location>
    <ligand>
        <name>(2E)-4-hydroxy-3-methylbut-2-enyl diphosphate</name>
        <dbReference type="ChEBI" id="CHEBI:128753"/>
    </ligand>
</feature>
<feature type="binding site" evidence="1">
    <location>
        <position position="124"/>
    </location>
    <ligand>
        <name>dimethylallyl diphosphate</name>
        <dbReference type="ChEBI" id="CHEBI:57623"/>
    </ligand>
</feature>
<feature type="binding site" evidence="1">
    <location>
        <position position="124"/>
    </location>
    <ligand>
        <name>isopentenyl diphosphate</name>
        <dbReference type="ChEBI" id="CHEBI:128769"/>
    </ligand>
</feature>
<feature type="binding site" evidence="1">
    <location>
        <position position="168"/>
    </location>
    <ligand>
        <name>(2E)-4-hydroxy-3-methylbut-2-enyl diphosphate</name>
        <dbReference type="ChEBI" id="CHEBI:128753"/>
    </ligand>
</feature>
<feature type="binding site" evidence="1">
    <location>
        <position position="198"/>
    </location>
    <ligand>
        <name>[4Fe-4S] cluster</name>
        <dbReference type="ChEBI" id="CHEBI:49883"/>
    </ligand>
</feature>
<feature type="binding site" evidence="1">
    <location>
        <position position="226"/>
    </location>
    <ligand>
        <name>(2E)-4-hydroxy-3-methylbut-2-enyl diphosphate</name>
        <dbReference type="ChEBI" id="CHEBI:128753"/>
    </ligand>
</feature>
<feature type="binding site" evidence="1">
    <location>
        <position position="226"/>
    </location>
    <ligand>
        <name>dimethylallyl diphosphate</name>
        <dbReference type="ChEBI" id="CHEBI:57623"/>
    </ligand>
</feature>
<feature type="binding site" evidence="1">
    <location>
        <position position="226"/>
    </location>
    <ligand>
        <name>isopentenyl diphosphate</name>
        <dbReference type="ChEBI" id="CHEBI:128769"/>
    </ligand>
</feature>
<feature type="binding site" evidence="1">
    <location>
        <position position="227"/>
    </location>
    <ligand>
        <name>(2E)-4-hydroxy-3-methylbut-2-enyl diphosphate</name>
        <dbReference type="ChEBI" id="CHEBI:128753"/>
    </ligand>
</feature>
<feature type="binding site" evidence="1">
    <location>
        <position position="227"/>
    </location>
    <ligand>
        <name>dimethylallyl diphosphate</name>
        <dbReference type="ChEBI" id="CHEBI:57623"/>
    </ligand>
</feature>
<feature type="binding site" evidence="1">
    <location>
        <position position="227"/>
    </location>
    <ligand>
        <name>isopentenyl diphosphate</name>
        <dbReference type="ChEBI" id="CHEBI:128769"/>
    </ligand>
</feature>
<feature type="binding site" evidence="1">
    <location>
        <position position="228"/>
    </location>
    <ligand>
        <name>(2E)-4-hydroxy-3-methylbut-2-enyl diphosphate</name>
        <dbReference type="ChEBI" id="CHEBI:128753"/>
    </ligand>
</feature>
<feature type="binding site" evidence="1">
    <location>
        <position position="228"/>
    </location>
    <ligand>
        <name>dimethylallyl diphosphate</name>
        <dbReference type="ChEBI" id="CHEBI:57623"/>
    </ligand>
</feature>
<feature type="binding site" evidence="1">
    <location>
        <position position="228"/>
    </location>
    <ligand>
        <name>isopentenyl diphosphate</name>
        <dbReference type="ChEBI" id="CHEBI:128769"/>
    </ligand>
</feature>
<feature type="binding site" evidence="1">
    <location>
        <position position="270"/>
    </location>
    <ligand>
        <name>(2E)-4-hydroxy-3-methylbut-2-enyl diphosphate</name>
        <dbReference type="ChEBI" id="CHEBI:128753"/>
    </ligand>
</feature>
<feature type="binding site" evidence="1">
    <location>
        <position position="270"/>
    </location>
    <ligand>
        <name>dimethylallyl diphosphate</name>
        <dbReference type="ChEBI" id="CHEBI:57623"/>
    </ligand>
</feature>
<feature type="binding site" evidence="1">
    <location>
        <position position="270"/>
    </location>
    <ligand>
        <name>isopentenyl diphosphate</name>
        <dbReference type="ChEBI" id="CHEBI:128769"/>
    </ligand>
</feature>
<gene>
    <name evidence="1" type="primary">ispH</name>
    <name type="ordered locus">PP_0606</name>
</gene>
<reference key="1">
    <citation type="journal article" date="2002" name="Environ. Microbiol.">
        <title>Complete genome sequence and comparative analysis of the metabolically versatile Pseudomonas putida KT2440.</title>
        <authorList>
            <person name="Nelson K.E."/>
            <person name="Weinel C."/>
            <person name="Paulsen I.T."/>
            <person name="Dodson R.J."/>
            <person name="Hilbert H."/>
            <person name="Martins dos Santos V.A.P."/>
            <person name="Fouts D.E."/>
            <person name="Gill S.R."/>
            <person name="Pop M."/>
            <person name="Holmes M."/>
            <person name="Brinkac L.M."/>
            <person name="Beanan M.J."/>
            <person name="DeBoy R.T."/>
            <person name="Daugherty S.C."/>
            <person name="Kolonay J.F."/>
            <person name="Madupu R."/>
            <person name="Nelson W.C."/>
            <person name="White O."/>
            <person name="Peterson J.D."/>
            <person name="Khouri H.M."/>
            <person name="Hance I."/>
            <person name="Chris Lee P."/>
            <person name="Holtzapple E.K."/>
            <person name="Scanlan D."/>
            <person name="Tran K."/>
            <person name="Moazzez A."/>
            <person name="Utterback T.R."/>
            <person name="Rizzo M."/>
            <person name="Lee K."/>
            <person name="Kosack D."/>
            <person name="Moestl D."/>
            <person name="Wedler H."/>
            <person name="Lauber J."/>
            <person name="Stjepandic D."/>
            <person name="Hoheisel J."/>
            <person name="Straetz M."/>
            <person name="Heim S."/>
            <person name="Kiewitz C."/>
            <person name="Eisen J.A."/>
            <person name="Timmis K.N."/>
            <person name="Duesterhoeft A."/>
            <person name="Tuemmler B."/>
            <person name="Fraser C.M."/>
        </authorList>
    </citation>
    <scope>NUCLEOTIDE SEQUENCE [LARGE SCALE GENOMIC DNA]</scope>
    <source>
        <strain>ATCC 47054 / DSM 6125 / CFBP 8728 / NCIMB 11950 / KT2440</strain>
    </source>
</reference>
<organism>
    <name type="scientific">Pseudomonas putida (strain ATCC 47054 / DSM 6125 / CFBP 8728 / NCIMB 11950 / KT2440)</name>
    <dbReference type="NCBI Taxonomy" id="160488"/>
    <lineage>
        <taxon>Bacteria</taxon>
        <taxon>Pseudomonadati</taxon>
        <taxon>Pseudomonadota</taxon>
        <taxon>Gammaproteobacteria</taxon>
        <taxon>Pseudomonadales</taxon>
        <taxon>Pseudomonadaceae</taxon>
        <taxon>Pseudomonas</taxon>
    </lineage>
</organism>
<protein>
    <recommendedName>
        <fullName evidence="1">4-hydroxy-3-methylbut-2-enyl diphosphate reductase</fullName>
        <shortName evidence="1">HMBPP reductase</shortName>
        <ecNumber evidence="1">1.17.7.4</ecNumber>
    </recommendedName>
</protein>
<keyword id="KW-0004">4Fe-4S</keyword>
<keyword id="KW-0408">Iron</keyword>
<keyword id="KW-0411">Iron-sulfur</keyword>
<keyword id="KW-0414">Isoprene biosynthesis</keyword>
<keyword id="KW-0479">Metal-binding</keyword>
<keyword id="KW-0560">Oxidoreductase</keyword>
<keyword id="KW-1185">Reference proteome</keyword>
<evidence type="ECO:0000255" key="1">
    <source>
        <dbReference type="HAMAP-Rule" id="MF_00191"/>
    </source>
</evidence>
<sequence length="315" mass="34543">MQIKLANPRGFCAGVDRAIEIVNRALEVFGPPIYVRHEVVHNKFVVEDLRNRGAIFVEELDQVPDDVIVIFSAHGVSQAVRQEAAGRGLKVFDATCPLVTKVHIEVAKYSRDGRECILIGHEGHPEVEGTMGQYDASNGGAIYLVEDEEDVANLQVRDPDHLAFVTQTTLSMDDTSRVIDALRARFPNIGGPRKDDICYATQNRQDAVKQLAGESDVVLVVGSPNSSNSNRLRELAERMGTPAYLIDGAEDLQRGWFDQAARIGITAGASAPEVLVRGVIEQLKAWGATGAEELDGREENITFSMPKELRVRSLI</sequence>
<proteinExistence type="inferred from homology"/>
<comment type="function">
    <text evidence="1">Catalyzes the conversion of 1-hydroxy-2-methyl-2-(E)-butenyl 4-diphosphate (HMBPP) into a mixture of isopentenyl diphosphate (IPP) and dimethylallyl diphosphate (DMAPP). Acts in the terminal step of the DOXP/MEP pathway for isoprenoid precursor biosynthesis.</text>
</comment>
<comment type="catalytic activity">
    <reaction evidence="1">
        <text>isopentenyl diphosphate + 2 oxidized [2Fe-2S]-[ferredoxin] + H2O = (2E)-4-hydroxy-3-methylbut-2-enyl diphosphate + 2 reduced [2Fe-2S]-[ferredoxin] + 2 H(+)</text>
        <dbReference type="Rhea" id="RHEA:24488"/>
        <dbReference type="Rhea" id="RHEA-COMP:10000"/>
        <dbReference type="Rhea" id="RHEA-COMP:10001"/>
        <dbReference type="ChEBI" id="CHEBI:15377"/>
        <dbReference type="ChEBI" id="CHEBI:15378"/>
        <dbReference type="ChEBI" id="CHEBI:33737"/>
        <dbReference type="ChEBI" id="CHEBI:33738"/>
        <dbReference type="ChEBI" id="CHEBI:128753"/>
        <dbReference type="ChEBI" id="CHEBI:128769"/>
        <dbReference type="EC" id="1.17.7.4"/>
    </reaction>
</comment>
<comment type="catalytic activity">
    <reaction evidence="1">
        <text>dimethylallyl diphosphate + 2 oxidized [2Fe-2S]-[ferredoxin] + H2O = (2E)-4-hydroxy-3-methylbut-2-enyl diphosphate + 2 reduced [2Fe-2S]-[ferredoxin] + 2 H(+)</text>
        <dbReference type="Rhea" id="RHEA:24825"/>
        <dbReference type="Rhea" id="RHEA-COMP:10000"/>
        <dbReference type="Rhea" id="RHEA-COMP:10001"/>
        <dbReference type="ChEBI" id="CHEBI:15377"/>
        <dbReference type="ChEBI" id="CHEBI:15378"/>
        <dbReference type="ChEBI" id="CHEBI:33737"/>
        <dbReference type="ChEBI" id="CHEBI:33738"/>
        <dbReference type="ChEBI" id="CHEBI:57623"/>
        <dbReference type="ChEBI" id="CHEBI:128753"/>
        <dbReference type="EC" id="1.17.7.4"/>
    </reaction>
</comment>
<comment type="cofactor">
    <cofactor evidence="1">
        <name>[4Fe-4S] cluster</name>
        <dbReference type="ChEBI" id="CHEBI:49883"/>
    </cofactor>
    <text evidence="1">Binds 1 [4Fe-4S] cluster per subunit.</text>
</comment>
<comment type="pathway">
    <text evidence="1">Isoprenoid biosynthesis; dimethylallyl diphosphate biosynthesis; dimethylallyl diphosphate from (2E)-4-hydroxy-3-methylbutenyl diphosphate: step 1/1.</text>
</comment>
<comment type="pathway">
    <text evidence="1">Isoprenoid biosynthesis; isopentenyl diphosphate biosynthesis via DXP pathway; isopentenyl diphosphate from 1-deoxy-D-xylulose 5-phosphate: step 6/6.</text>
</comment>
<comment type="similarity">
    <text evidence="1">Belongs to the IspH family.</text>
</comment>
<name>ISPH_PSEPK</name>